<sequence length="430" mass="46993">MATDAAELFKEALSLFPGGVNSPVRAMKHLPTPLIVKRAEGAFLYTIDGVKLIDYCMGFGPLILGHRHPTVLEAVRRSLEDGWLYGALTRNEVELAKEINSSIRSVEMIRFVNTGTEAVMNAVRLARGFTGRRYIVKFEGNYHGAFDYVLVKAGSGAATWGVPTSAGILEDAVKYTLVVPYNDVEALERVFREHGSEIALLLVEPIAGNYGLIIPDLEFIKATRELTERYGALLLFDEVITGFRVGLNGAQGLFGIKPDLTTLGKIIGGGFPIGAFGGRRDVMSMITPQGPVYNAGTFNAHPVSVAAGLATIRVIKSGGVYEVANEAAERITEAILDSASRSGFDIVVKRIASMFQFYFKKGDVKTPADVRASDEKLYLTFHREALSRGVYFTPSQYEVNFTSAAHSRDVVDETIRVIEEVFKALKTKAH</sequence>
<feature type="chain" id="PRO_0000382392" description="Glutamate-1-semialdehyde 2,1-aminomutase">
    <location>
        <begin position="1"/>
        <end position="430"/>
    </location>
</feature>
<feature type="modified residue" description="N6-(pyridoxal phosphate)lysine" evidence="1">
    <location>
        <position position="265"/>
    </location>
</feature>
<organism>
    <name type="scientific">Caldivirga maquilingensis (strain ATCC 700844 / DSM 13496 / JCM 10307 / IC-167)</name>
    <dbReference type="NCBI Taxonomy" id="397948"/>
    <lineage>
        <taxon>Archaea</taxon>
        <taxon>Thermoproteota</taxon>
        <taxon>Thermoprotei</taxon>
        <taxon>Thermoproteales</taxon>
        <taxon>Thermoproteaceae</taxon>
        <taxon>Caldivirga</taxon>
    </lineage>
</organism>
<keyword id="KW-0963">Cytoplasm</keyword>
<keyword id="KW-0413">Isomerase</keyword>
<keyword id="KW-0627">Porphyrin biosynthesis</keyword>
<keyword id="KW-0663">Pyridoxal phosphate</keyword>
<keyword id="KW-1185">Reference proteome</keyword>
<accession>A8M919</accession>
<evidence type="ECO:0000255" key="1">
    <source>
        <dbReference type="HAMAP-Rule" id="MF_00375"/>
    </source>
</evidence>
<dbReference type="EC" id="5.4.3.8" evidence="1"/>
<dbReference type="EMBL" id="CP000852">
    <property type="protein sequence ID" value="ABW02238.1"/>
    <property type="molecule type" value="Genomic_DNA"/>
</dbReference>
<dbReference type="RefSeq" id="WP_012186457.1">
    <property type="nucleotide sequence ID" value="NC_009954.1"/>
</dbReference>
<dbReference type="SMR" id="A8M919"/>
<dbReference type="STRING" id="397948.Cmaq_1413"/>
<dbReference type="GeneID" id="5709309"/>
<dbReference type="KEGG" id="cma:Cmaq_1413"/>
<dbReference type="eggNOG" id="arCOG00918">
    <property type="taxonomic scope" value="Archaea"/>
</dbReference>
<dbReference type="HOGENOM" id="CLU_016922_1_5_2"/>
<dbReference type="OrthoDB" id="6524at2157"/>
<dbReference type="UniPathway" id="UPA00251">
    <property type="reaction ID" value="UER00317"/>
</dbReference>
<dbReference type="Proteomes" id="UP000001137">
    <property type="component" value="Chromosome"/>
</dbReference>
<dbReference type="GO" id="GO:0005737">
    <property type="term" value="C:cytoplasm"/>
    <property type="evidence" value="ECO:0007669"/>
    <property type="project" value="UniProtKB-SubCell"/>
</dbReference>
<dbReference type="GO" id="GO:0042286">
    <property type="term" value="F:glutamate-1-semialdehyde 2,1-aminomutase activity"/>
    <property type="evidence" value="ECO:0007669"/>
    <property type="project" value="UniProtKB-UniRule"/>
</dbReference>
<dbReference type="GO" id="GO:0030170">
    <property type="term" value="F:pyridoxal phosphate binding"/>
    <property type="evidence" value="ECO:0007669"/>
    <property type="project" value="InterPro"/>
</dbReference>
<dbReference type="GO" id="GO:0008483">
    <property type="term" value="F:transaminase activity"/>
    <property type="evidence" value="ECO:0007669"/>
    <property type="project" value="InterPro"/>
</dbReference>
<dbReference type="GO" id="GO:0006782">
    <property type="term" value="P:protoporphyrinogen IX biosynthetic process"/>
    <property type="evidence" value="ECO:0007669"/>
    <property type="project" value="UniProtKB-UniRule"/>
</dbReference>
<dbReference type="CDD" id="cd00610">
    <property type="entry name" value="OAT_like"/>
    <property type="match status" value="1"/>
</dbReference>
<dbReference type="FunFam" id="3.40.640.10:FF:000021">
    <property type="entry name" value="Glutamate-1-semialdehyde 2,1-aminomutase"/>
    <property type="match status" value="1"/>
</dbReference>
<dbReference type="Gene3D" id="3.90.1150.10">
    <property type="entry name" value="Aspartate Aminotransferase, domain 1"/>
    <property type="match status" value="1"/>
</dbReference>
<dbReference type="Gene3D" id="3.40.640.10">
    <property type="entry name" value="Type I PLP-dependent aspartate aminotransferase-like (Major domain)"/>
    <property type="match status" value="1"/>
</dbReference>
<dbReference type="HAMAP" id="MF_00375">
    <property type="entry name" value="HemL_aminotrans_3"/>
    <property type="match status" value="1"/>
</dbReference>
<dbReference type="InterPro" id="IPR004639">
    <property type="entry name" value="4pyrrol_synth_GluAld_NH2Trfase"/>
</dbReference>
<dbReference type="InterPro" id="IPR005814">
    <property type="entry name" value="Aminotrans_3"/>
</dbReference>
<dbReference type="InterPro" id="IPR049704">
    <property type="entry name" value="Aminotrans_3_PPA_site"/>
</dbReference>
<dbReference type="InterPro" id="IPR015424">
    <property type="entry name" value="PyrdxlP-dep_Trfase"/>
</dbReference>
<dbReference type="InterPro" id="IPR015421">
    <property type="entry name" value="PyrdxlP-dep_Trfase_major"/>
</dbReference>
<dbReference type="InterPro" id="IPR015422">
    <property type="entry name" value="PyrdxlP-dep_Trfase_small"/>
</dbReference>
<dbReference type="NCBIfam" id="TIGR00713">
    <property type="entry name" value="hemL"/>
    <property type="match status" value="1"/>
</dbReference>
<dbReference type="NCBIfam" id="NF000818">
    <property type="entry name" value="PRK00062.1"/>
    <property type="match status" value="1"/>
</dbReference>
<dbReference type="PANTHER" id="PTHR43713">
    <property type="entry name" value="GLUTAMATE-1-SEMIALDEHYDE 2,1-AMINOMUTASE"/>
    <property type="match status" value="1"/>
</dbReference>
<dbReference type="PANTHER" id="PTHR43713:SF3">
    <property type="entry name" value="GLUTAMATE-1-SEMIALDEHYDE 2,1-AMINOMUTASE 1, CHLOROPLASTIC-RELATED"/>
    <property type="match status" value="1"/>
</dbReference>
<dbReference type="Pfam" id="PF00202">
    <property type="entry name" value="Aminotran_3"/>
    <property type="match status" value="1"/>
</dbReference>
<dbReference type="SUPFAM" id="SSF53383">
    <property type="entry name" value="PLP-dependent transferases"/>
    <property type="match status" value="1"/>
</dbReference>
<dbReference type="PROSITE" id="PS00600">
    <property type="entry name" value="AA_TRANSFER_CLASS_3"/>
    <property type="match status" value="1"/>
</dbReference>
<protein>
    <recommendedName>
        <fullName evidence="1">Glutamate-1-semialdehyde 2,1-aminomutase</fullName>
        <shortName evidence="1">GSA</shortName>
        <ecNumber evidence="1">5.4.3.8</ecNumber>
    </recommendedName>
    <alternativeName>
        <fullName evidence="1">Glutamate-1-semialdehyde aminotransferase</fullName>
        <shortName evidence="1">GSA-AT</shortName>
    </alternativeName>
</protein>
<proteinExistence type="inferred from homology"/>
<gene>
    <name evidence="1" type="primary">hemL</name>
    <name type="ordered locus">Cmaq_1413</name>
</gene>
<reference key="1">
    <citation type="submission" date="2007-10" db="EMBL/GenBank/DDBJ databases">
        <title>Complete sequence of Caldivirga maquilingensis IC-167.</title>
        <authorList>
            <consortium name="US DOE Joint Genome Institute"/>
            <person name="Copeland A."/>
            <person name="Lucas S."/>
            <person name="Lapidus A."/>
            <person name="Barry K."/>
            <person name="Glavina del Rio T."/>
            <person name="Dalin E."/>
            <person name="Tice H."/>
            <person name="Pitluck S."/>
            <person name="Saunders E."/>
            <person name="Brettin T."/>
            <person name="Bruce D."/>
            <person name="Detter J.C."/>
            <person name="Han C."/>
            <person name="Schmutz J."/>
            <person name="Larimer F."/>
            <person name="Land M."/>
            <person name="Hauser L."/>
            <person name="Kyrpides N."/>
            <person name="Ivanova N."/>
            <person name="Biddle J.F."/>
            <person name="Zhang Z."/>
            <person name="Fitz-Gibbon S.T."/>
            <person name="Lowe T.M."/>
            <person name="Saltikov C."/>
            <person name="House C.H."/>
            <person name="Richardson P."/>
        </authorList>
    </citation>
    <scope>NUCLEOTIDE SEQUENCE [LARGE SCALE GENOMIC DNA]</scope>
    <source>
        <strain>ATCC 700844 / DSM 13496 / JCM 10307 / IC-167</strain>
    </source>
</reference>
<comment type="catalytic activity">
    <reaction evidence="1">
        <text>(S)-4-amino-5-oxopentanoate = 5-aminolevulinate</text>
        <dbReference type="Rhea" id="RHEA:14265"/>
        <dbReference type="ChEBI" id="CHEBI:57501"/>
        <dbReference type="ChEBI" id="CHEBI:356416"/>
        <dbReference type="EC" id="5.4.3.8"/>
    </reaction>
</comment>
<comment type="cofactor">
    <cofactor evidence="1">
        <name>pyridoxal 5'-phosphate</name>
        <dbReference type="ChEBI" id="CHEBI:597326"/>
    </cofactor>
</comment>
<comment type="pathway">
    <text evidence="1">Porphyrin-containing compound metabolism; protoporphyrin-IX biosynthesis; 5-aminolevulinate from L-glutamyl-tRNA(Glu): step 2/2.</text>
</comment>
<comment type="subcellular location">
    <subcellularLocation>
        <location evidence="1">Cytoplasm</location>
    </subcellularLocation>
</comment>
<comment type="similarity">
    <text evidence="1">Belongs to the class-III pyridoxal-phosphate-dependent aminotransferase family. HemL subfamily.</text>
</comment>
<name>GSA_CALMQ</name>